<name>PHCB_ARTPT</name>
<accession>P72508</accession>
<gene>
    <name type="primary">cpcB</name>
</gene>
<keyword id="KW-0002">3D-structure</keyword>
<keyword id="KW-0042">Antenna complex</keyword>
<keyword id="KW-0089">Bile pigment</keyword>
<keyword id="KW-0157">Chromophore</keyword>
<keyword id="KW-0249">Electron transport</keyword>
<keyword id="KW-0472">Membrane</keyword>
<keyword id="KW-0488">Methylation</keyword>
<keyword id="KW-0602">Photosynthesis</keyword>
<keyword id="KW-0605">Phycobilisome</keyword>
<keyword id="KW-0793">Thylakoid</keyword>
<keyword id="KW-0813">Transport</keyword>
<proteinExistence type="evidence at protein level"/>
<organism>
    <name type="scientific">Arthrospira platensis</name>
    <name type="common">Spirulina platensis</name>
    <dbReference type="NCBI Taxonomy" id="118562"/>
    <lineage>
        <taxon>Bacteria</taxon>
        <taxon>Bacillati</taxon>
        <taxon>Cyanobacteriota</taxon>
        <taxon>Cyanophyceae</taxon>
        <taxon>Oscillatoriophycideae</taxon>
        <taxon>Oscillatoriales</taxon>
        <taxon>Microcoleaceae</taxon>
        <taxon>Arthrospira</taxon>
    </lineage>
</organism>
<evidence type="ECO:0000269" key="1">
    <source>
    </source>
</evidence>
<evidence type="ECO:0000269" key="2">
    <source>
    </source>
</evidence>
<evidence type="ECO:0000305" key="3"/>
<evidence type="ECO:0007744" key="4">
    <source>
        <dbReference type="PDB" id="1GH0"/>
    </source>
</evidence>
<evidence type="ECO:0007744" key="5">
    <source>
        <dbReference type="PDB" id="1HA7"/>
    </source>
</evidence>
<evidence type="ECO:0007744" key="6">
    <source>
        <dbReference type="PDB" id="2UUM"/>
    </source>
</evidence>
<evidence type="ECO:0007829" key="7">
    <source>
        <dbReference type="PDB" id="1GH0"/>
    </source>
</evidence>
<comment type="function">
    <text>Light-harvesting photosynthetic bile pigment-protein from the phycobiliprotein complex (phycobilisome, PBS). Phycocyanin is the major phycobiliprotein in the PBS rod.</text>
</comment>
<comment type="subunit">
    <text evidence="1 2">The alpha and beta subunits exhibit high affinity for one another and form heterodimers. These heterodimers form heterohexamers of 3 alpha and 3 beta subunits which, in turn, aggregate into a heterododecamer consisting of 2 heterohexamers.</text>
</comment>
<comment type="subcellular location">
    <subcellularLocation>
        <location>Cellular thylakoid membrane</location>
        <topology>Peripheral membrane protein</topology>
        <orientation>Cytoplasmic side</orientation>
    </subcellularLocation>
    <text>Part of the phycobilisome rod.</text>
</comment>
<comment type="PTM">
    <text evidence="1 2 4 5 6">Contains two covalently linked bilin chromophores.</text>
</comment>
<comment type="similarity">
    <text evidence="3">Belongs to the phycobiliprotein family.</text>
</comment>
<protein>
    <recommendedName>
        <fullName>C-phycocyanin beta subunit</fullName>
    </recommendedName>
</protein>
<sequence>MFDAFTKVVSQADTRGEMLSTAQIDALSQMVAESNKRLDAVNRITSNASTIVSNAARSLFAEQPQLIAPGGNAYTSRRMAACLRDMEIILRYVTYAVFAGDASVLEDRCLNGLRETYLALGTPGSSVAVGVGKMKEAALAIVNDPAGITPGDCSALASEIASYFDRACAAVS</sequence>
<reference key="1">
    <citation type="submission" date="1996-10" db="EMBL/GenBank/DDBJ databases">
        <authorList>
            <person name="Jeamton W."/>
            <person name="Chaisawadi S."/>
            <person name="Deshnium P."/>
            <person name="Castets A.M."/>
            <person name="Coursin T."/>
            <person name="Tandeau de Marsac N."/>
            <person name="Tanticharoen M."/>
            <person name="Cheevadhanarak S."/>
        </authorList>
    </citation>
    <scope>NUCLEOTIDE SEQUENCE [GENOMIC DNA]</scope>
    <source>
        <strain>C1</strain>
    </source>
</reference>
<reference evidence="4" key="2">
    <citation type="journal article" date="2001" name="Acta Crystallogr. D">
        <title>Structure of C-phycocyanin from Spirulina platensis at 2.2 A resolution: a novel monoclinic crystal form for phycobiliproteins in phycobilisomes.</title>
        <authorList>
            <person name="Wang X.Q."/>
            <person name="Li L.N."/>
            <person name="Chang W.R."/>
            <person name="Zhang J.P."/>
            <person name="Gui L.L."/>
            <person name="Guo B.J."/>
            <person name="Liang D.C."/>
        </authorList>
    </citation>
    <scope>X-RAY CRYSTALLOGRAPHY (2.20 ANGSTROMS) IN COMPLEX WITH PHYCOCYANOBILIN CHROMOPHORE</scope>
    <scope>SUBUNIT</scope>
    <scope>METHYLATION AT ASN-72</scope>
    <scope>SEQUENCE REVISION TO 76</scope>
</reference>
<reference evidence="5" key="3">
    <citation type="journal article" date="2001" name="Biochem. Biophys. Res. Commun.">
        <title>Crystal structure of a light-harvesting protein C-phycocyanin from Spirulina platensis.</title>
        <authorList>
            <person name="Padyana A.K."/>
            <person name="Bhat V.B."/>
            <person name="Madhyasta K.M."/>
            <person name="Rajashankar K.R."/>
            <person name="Ramakumar S."/>
        </authorList>
    </citation>
    <scope>X-RAY CRYSTALLOGRAPHY (2.2 ANGSTROMS) IN COMPLEX WITH PHYCOCYANOBILIN CHROMOPHORE</scope>
    <scope>METHYLATION AT ASN-72</scope>
    <scope>SEQUENCE REVISION TO 76</scope>
</reference>
<reference evidence="6" key="4">
    <citation type="submission" date="2007-03" db="PDB data bank">
        <title>Crystal Structure of C-Phycocyanin from Phormidium, Lyngbya Spp. (Marine) and Spirulina Sp. (Fresh Water) Shows Two Different Ways of Energy Transfer between Two Hexamers.</title>
        <authorList>
            <person name="Satyanarayana L."/>
            <person name="Patel A."/>
            <person name="Mishra S."/>
            <person name="Ghosh P.K."/>
            <person name="Suresh C.G."/>
        </authorList>
    </citation>
    <scope>X-RAY CRYSTALLOGRAPHY (3.00 ANGSTROMS) IN COMPLEX WITH PHYCOCYANOBILIN CHROMOPHORE</scope>
    <scope>SUBUNIT</scope>
</reference>
<feature type="chain" id="PRO_0000199155" description="C-phycocyanin beta subunit">
    <location>
        <begin position="1"/>
        <end position="172"/>
    </location>
</feature>
<feature type="binding site" description="covalent" evidence="1 2 4 5 6">
    <location>
        <position position="82"/>
    </location>
    <ligand>
        <name>(2R,3E)-phycocyanobilin</name>
        <dbReference type="ChEBI" id="CHEBI:85275"/>
        <label>1</label>
    </ligand>
</feature>
<feature type="binding site" description="covalent" evidence="1 2 4 5 6">
    <location>
        <position position="153"/>
    </location>
    <ligand>
        <name>(2R,3E)-phycocyanobilin</name>
        <dbReference type="ChEBI" id="CHEBI:85275"/>
        <label>2</label>
    </ligand>
</feature>
<feature type="modified residue" description="N4-methylasparagine" evidence="1 2 4 5">
    <location>
        <position position="72"/>
    </location>
</feature>
<feature type="sequence conflict" description="In Ref. 1; CAA70295." evidence="3" ref="1">
    <original>S</original>
    <variation>N</variation>
    <location>
        <position position="76"/>
    </location>
</feature>
<feature type="helix" evidence="7">
    <location>
        <begin position="4"/>
        <end position="14"/>
    </location>
</feature>
<feature type="helix" evidence="7">
    <location>
        <begin position="21"/>
        <end position="32"/>
    </location>
</feature>
<feature type="helix" evidence="7">
    <location>
        <begin position="34"/>
        <end position="46"/>
    </location>
</feature>
<feature type="helix" evidence="7">
    <location>
        <begin position="48"/>
        <end position="62"/>
    </location>
</feature>
<feature type="helix" evidence="7">
    <location>
        <begin position="64"/>
        <end position="66"/>
    </location>
</feature>
<feature type="helix" evidence="7">
    <location>
        <begin position="76"/>
        <end position="99"/>
    </location>
</feature>
<feature type="helix" evidence="7">
    <location>
        <begin position="103"/>
        <end position="108"/>
    </location>
</feature>
<feature type="turn" evidence="7">
    <location>
        <begin position="109"/>
        <end position="112"/>
    </location>
</feature>
<feature type="helix" evidence="7">
    <location>
        <begin position="113"/>
        <end position="120"/>
    </location>
</feature>
<feature type="helix" evidence="7">
    <location>
        <begin position="124"/>
        <end position="142"/>
    </location>
</feature>
<feature type="helix" evidence="7">
    <location>
        <begin position="154"/>
        <end position="171"/>
    </location>
</feature>
<dbReference type="EMBL" id="Y09074">
    <property type="protein sequence ID" value="CAA70295.1"/>
    <property type="molecule type" value="Genomic_DNA"/>
</dbReference>
<dbReference type="PDB" id="1GH0">
    <property type="method" value="X-ray"/>
    <property type="resolution" value="2.20 A"/>
    <property type="chains" value="B/D/F/H/J/L/N/P/R/T/V/X=1-172"/>
</dbReference>
<dbReference type="PDB" id="1HA7">
    <property type="method" value="X-ray"/>
    <property type="resolution" value="2.20 A"/>
    <property type="chains" value="B/D/F/H/J/L/N/P/R/T/V/X=1-172"/>
</dbReference>
<dbReference type="PDB" id="2UUM">
    <property type="method" value="X-ray"/>
    <property type="resolution" value="3.00 A"/>
    <property type="chains" value="B/D/F/H/J/L/N/P/R/T/V/X=1-172"/>
</dbReference>
<dbReference type="PDBsum" id="1GH0"/>
<dbReference type="PDBsum" id="1HA7"/>
<dbReference type="PDBsum" id="2UUM"/>
<dbReference type="SASBDB" id="P72508"/>
<dbReference type="SMR" id="P72508"/>
<dbReference type="Allergome" id="8833">
    <property type="allergen name" value="Art pl beta_Phycocyanin"/>
</dbReference>
<dbReference type="iPTMnet" id="P72508"/>
<dbReference type="EvolutionaryTrace" id="P72508"/>
<dbReference type="GO" id="GO:0030089">
    <property type="term" value="C:phycobilisome"/>
    <property type="evidence" value="ECO:0007669"/>
    <property type="project" value="UniProtKB-KW"/>
</dbReference>
<dbReference type="GO" id="GO:0031676">
    <property type="term" value="C:plasma membrane-derived thylakoid membrane"/>
    <property type="evidence" value="ECO:0007669"/>
    <property type="project" value="UniProtKB-SubCell"/>
</dbReference>
<dbReference type="GO" id="GO:0015979">
    <property type="term" value="P:photosynthesis"/>
    <property type="evidence" value="ECO:0007669"/>
    <property type="project" value="UniProtKB-KW"/>
</dbReference>
<dbReference type="CDD" id="cd14768">
    <property type="entry name" value="PC_PEC_beta"/>
    <property type="match status" value="1"/>
</dbReference>
<dbReference type="Gene3D" id="1.10.490.20">
    <property type="entry name" value="Phycocyanins"/>
    <property type="match status" value="1"/>
</dbReference>
<dbReference type="InterPro" id="IPR009050">
    <property type="entry name" value="Globin-like_sf"/>
</dbReference>
<dbReference type="InterPro" id="IPR012128">
    <property type="entry name" value="Phycobilisome_asu/bsu"/>
</dbReference>
<dbReference type="InterPro" id="IPR038719">
    <property type="entry name" value="Phycobilisome_asu/bsu_sf"/>
</dbReference>
<dbReference type="InterPro" id="IPR006247">
    <property type="entry name" value="Phycocyanin_b"/>
</dbReference>
<dbReference type="NCBIfam" id="TIGR01339">
    <property type="entry name" value="phycocy_beta"/>
    <property type="match status" value="1"/>
</dbReference>
<dbReference type="PANTHER" id="PTHR34011:SF7">
    <property type="entry name" value="C-PHYCOCYANIN BETA SUBUNIT"/>
    <property type="match status" value="1"/>
</dbReference>
<dbReference type="PANTHER" id="PTHR34011">
    <property type="entry name" value="PHYCOBILISOME 32.1 KDA LINKER POLYPEPTIDE, PHYCOCYANIN-ASSOCIATED, ROD 2-RELATED"/>
    <property type="match status" value="1"/>
</dbReference>
<dbReference type="Pfam" id="PF00502">
    <property type="entry name" value="Phycobilisome"/>
    <property type="match status" value="1"/>
</dbReference>
<dbReference type="PIRSF" id="PIRSF000081">
    <property type="entry name" value="Phycocyanin"/>
    <property type="match status" value="1"/>
</dbReference>
<dbReference type="SUPFAM" id="SSF46458">
    <property type="entry name" value="Globin-like"/>
    <property type="match status" value="1"/>
</dbReference>